<accession>Q93XY5</accession>
<accession>Q9SK78</accession>
<reference key="1">
    <citation type="journal article" date="1999" name="Nature">
        <title>Sequence and analysis of chromosome 2 of the plant Arabidopsis thaliana.</title>
        <authorList>
            <person name="Lin X."/>
            <person name="Kaul S."/>
            <person name="Rounsley S.D."/>
            <person name="Shea T.P."/>
            <person name="Benito M.-I."/>
            <person name="Town C.D."/>
            <person name="Fujii C.Y."/>
            <person name="Mason T.M."/>
            <person name="Bowman C.L."/>
            <person name="Barnstead M.E."/>
            <person name="Feldblyum T.V."/>
            <person name="Buell C.R."/>
            <person name="Ketchum K.A."/>
            <person name="Lee J.J."/>
            <person name="Ronning C.M."/>
            <person name="Koo H.L."/>
            <person name="Moffat K.S."/>
            <person name="Cronin L.A."/>
            <person name="Shen M."/>
            <person name="Pai G."/>
            <person name="Van Aken S."/>
            <person name="Umayam L."/>
            <person name="Tallon L.J."/>
            <person name="Gill J.E."/>
            <person name="Adams M.D."/>
            <person name="Carrera A.J."/>
            <person name="Creasy T.H."/>
            <person name="Goodman H.M."/>
            <person name="Somerville C.R."/>
            <person name="Copenhaver G.P."/>
            <person name="Preuss D."/>
            <person name="Nierman W.C."/>
            <person name="White O."/>
            <person name="Eisen J.A."/>
            <person name="Salzberg S.L."/>
            <person name="Fraser C.M."/>
            <person name="Venter J.C."/>
        </authorList>
    </citation>
    <scope>NUCLEOTIDE SEQUENCE [LARGE SCALE GENOMIC DNA]</scope>
    <source>
        <strain>cv. Columbia</strain>
    </source>
</reference>
<reference key="2">
    <citation type="journal article" date="2017" name="Plant J.">
        <title>Araport11: a complete reannotation of the Arabidopsis thaliana reference genome.</title>
        <authorList>
            <person name="Cheng C.Y."/>
            <person name="Krishnakumar V."/>
            <person name="Chan A.P."/>
            <person name="Thibaud-Nissen F."/>
            <person name="Schobel S."/>
            <person name="Town C.D."/>
        </authorList>
    </citation>
    <scope>GENOME REANNOTATION</scope>
    <source>
        <strain>cv. Columbia</strain>
    </source>
</reference>
<reference key="3">
    <citation type="journal article" date="2003" name="Science">
        <title>Empirical analysis of transcriptional activity in the Arabidopsis genome.</title>
        <authorList>
            <person name="Yamada K."/>
            <person name="Lim J."/>
            <person name="Dale J.M."/>
            <person name="Chen H."/>
            <person name="Shinn P."/>
            <person name="Palm C.J."/>
            <person name="Southwick A.M."/>
            <person name="Wu H.C."/>
            <person name="Kim C.J."/>
            <person name="Nguyen M."/>
            <person name="Pham P.K."/>
            <person name="Cheuk R.F."/>
            <person name="Karlin-Newmann G."/>
            <person name="Liu S.X."/>
            <person name="Lam B."/>
            <person name="Sakano H."/>
            <person name="Wu T."/>
            <person name="Yu G."/>
            <person name="Miranda M."/>
            <person name="Quach H.L."/>
            <person name="Tripp M."/>
            <person name="Chang C.H."/>
            <person name="Lee J.M."/>
            <person name="Toriumi M.J."/>
            <person name="Chan M.M."/>
            <person name="Tang C.C."/>
            <person name="Onodera C.S."/>
            <person name="Deng J.M."/>
            <person name="Akiyama K."/>
            <person name="Ansari Y."/>
            <person name="Arakawa T."/>
            <person name="Banh J."/>
            <person name="Banno F."/>
            <person name="Bowser L."/>
            <person name="Brooks S.Y."/>
            <person name="Carninci P."/>
            <person name="Chao Q."/>
            <person name="Choy N."/>
            <person name="Enju A."/>
            <person name="Goldsmith A.D."/>
            <person name="Gurjal M."/>
            <person name="Hansen N.F."/>
            <person name="Hayashizaki Y."/>
            <person name="Johnson-Hopson C."/>
            <person name="Hsuan V.W."/>
            <person name="Iida K."/>
            <person name="Karnes M."/>
            <person name="Khan S."/>
            <person name="Koesema E."/>
            <person name="Ishida J."/>
            <person name="Jiang P.X."/>
            <person name="Jones T."/>
            <person name="Kawai J."/>
            <person name="Kamiya A."/>
            <person name="Meyers C."/>
            <person name="Nakajima M."/>
            <person name="Narusaka M."/>
            <person name="Seki M."/>
            <person name="Sakurai T."/>
            <person name="Satou M."/>
            <person name="Tamse R."/>
            <person name="Vaysberg M."/>
            <person name="Wallender E.K."/>
            <person name="Wong C."/>
            <person name="Yamamura Y."/>
            <person name="Yuan S."/>
            <person name="Shinozaki K."/>
            <person name="Davis R.W."/>
            <person name="Theologis A."/>
            <person name="Ecker J.R."/>
        </authorList>
    </citation>
    <scope>NUCLEOTIDE SEQUENCE [LARGE SCALE MRNA]</scope>
    <source>
        <strain>cv. Columbia</strain>
    </source>
</reference>
<reference key="4">
    <citation type="submission" date="2002-03" db="EMBL/GenBank/DDBJ databases">
        <title>Full-length cDNA from Arabidopsis thaliana.</title>
        <authorList>
            <person name="Brover V.V."/>
            <person name="Troukhan M.E."/>
            <person name="Alexandrov N.A."/>
            <person name="Lu Y.-P."/>
            <person name="Flavell R.B."/>
            <person name="Feldmann K.A."/>
        </authorList>
    </citation>
    <scope>NUCLEOTIDE SEQUENCE [LARGE SCALE MRNA]</scope>
</reference>
<reference key="5">
    <citation type="journal article" date="2007" name="Mol. Cell. Proteomics">
        <title>A proteomics dissection of Arabidopsis thaliana vacuoles isolated from cell culture.</title>
        <authorList>
            <person name="Jaquinod M."/>
            <person name="Villiers F."/>
            <person name="Kieffer-Jaquinod S."/>
            <person name="Hugouvieux V."/>
            <person name="Bruley C."/>
            <person name="Garin J."/>
            <person name="Bourguignon J."/>
        </authorList>
    </citation>
    <scope>IDENTIFICATION BY MASS SPECTROMETRY</scope>
    <scope>SUBCELLULAR LOCATION [LARGE SCALE ANALYSIS]</scope>
</reference>
<reference key="6">
    <citation type="journal article" date="2008" name="J. Gen. Virol.">
        <title>Analysis of tobamovirus multiplication in Arabidopsis thaliana mutants defective in TOM2A homologues.</title>
        <authorList>
            <person name="Fujisaki K."/>
            <person name="Kobayashi S."/>
            <person name="Tsujimoto Y."/>
            <person name="Naito S."/>
            <person name="Ishikawa M."/>
        </authorList>
    </citation>
    <scope>FUNCTION</scope>
    <scope>DISRUPTION PHENOTYPE</scope>
    <scope>TISSUE SPECIFICITY</scope>
</reference>
<dbReference type="EMBL" id="AC006569">
    <property type="protein sequence ID" value="AAD21765.2"/>
    <property type="molecule type" value="Genomic_DNA"/>
</dbReference>
<dbReference type="EMBL" id="CP002685">
    <property type="protein sequence ID" value="AEC06983.1"/>
    <property type="molecule type" value="Genomic_DNA"/>
</dbReference>
<dbReference type="EMBL" id="AY054570">
    <property type="protein sequence ID" value="AAK96761.1"/>
    <property type="molecule type" value="mRNA"/>
</dbReference>
<dbReference type="EMBL" id="AY064662">
    <property type="protein sequence ID" value="AAL47370.1"/>
    <property type="molecule type" value="mRNA"/>
</dbReference>
<dbReference type="EMBL" id="AY088475">
    <property type="protein sequence ID" value="AAM66011.1"/>
    <property type="molecule type" value="mRNA"/>
</dbReference>
<dbReference type="PIR" id="F84586">
    <property type="entry name" value="F84586"/>
</dbReference>
<dbReference type="RefSeq" id="NP_565468.1">
    <property type="nucleotide sequence ID" value="NM_127582.3"/>
</dbReference>
<dbReference type="FunCoup" id="Q93XY5">
    <property type="interactions" value="216"/>
</dbReference>
<dbReference type="STRING" id="3702.Q93XY5"/>
<dbReference type="TCDB" id="8.A.40.5.2">
    <property type="family name" value="the tetraspanin (tetraspanin) family"/>
</dbReference>
<dbReference type="iPTMnet" id="Q93XY5"/>
<dbReference type="SwissPalm" id="Q93XY5"/>
<dbReference type="PaxDb" id="3702-AT2G20230.1"/>
<dbReference type="ProteomicsDB" id="232849"/>
<dbReference type="EnsemblPlants" id="AT2G20230.1">
    <property type="protein sequence ID" value="AT2G20230.1"/>
    <property type="gene ID" value="AT2G20230"/>
</dbReference>
<dbReference type="GeneID" id="816542"/>
<dbReference type="Gramene" id="AT2G20230.1">
    <property type="protein sequence ID" value="AT2G20230.1"/>
    <property type="gene ID" value="AT2G20230"/>
</dbReference>
<dbReference type="KEGG" id="ath:AT2G20230"/>
<dbReference type="Araport" id="AT2G20230"/>
<dbReference type="TAIR" id="AT2G20230"/>
<dbReference type="eggNOG" id="ENOG502QVPS">
    <property type="taxonomic scope" value="Eukaryota"/>
</dbReference>
<dbReference type="HOGENOM" id="CLU_055730_0_0_1"/>
<dbReference type="InParanoid" id="Q93XY5"/>
<dbReference type="OMA" id="DHHWEKD"/>
<dbReference type="OrthoDB" id="723894at2759"/>
<dbReference type="PhylomeDB" id="Q93XY5"/>
<dbReference type="PRO" id="PR:Q93XY5"/>
<dbReference type="Proteomes" id="UP000006548">
    <property type="component" value="Chromosome 2"/>
</dbReference>
<dbReference type="ExpressionAtlas" id="Q93XY5">
    <property type="expression patterns" value="baseline and differential"/>
</dbReference>
<dbReference type="GO" id="GO:0005739">
    <property type="term" value="C:mitochondrion"/>
    <property type="evidence" value="ECO:0007005"/>
    <property type="project" value="TAIR"/>
</dbReference>
<dbReference type="GO" id="GO:0000325">
    <property type="term" value="C:plant-type vacuole"/>
    <property type="evidence" value="ECO:0007005"/>
    <property type="project" value="TAIR"/>
</dbReference>
<dbReference type="GO" id="GO:0005774">
    <property type="term" value="C:vacuolar membrane"/>
    <property type="evidence" value="ECO:0007669"/>
    <property type="project" value="UniProtKB-SubCell"/>
</dbReference>
<dbReference type="InterPro" id="IPR018499">
    <property type="entry name" value="Tetraspanin/Peripherin"/>
</dbReference>
<dbReference type="Pfam" id="PF00335">
    <property type="entry name" value="Tetraspanin"/>
    <property type="match status" value="1"/>
</dbReference>
<dbReference type="PRINTS" id="PR00259">
    <property type="entry name" value="TMFOUR"/>
</dbReference>
<sequence length="270" mass="29721">MRRNCCHVSFASTLKILNFVQAFIGVSIIIYSIWMLHEYSRHLPVDPPPSASSSSGTEIATSVSEPLKNPIDFVASIILGSNGGDHGFNLRSLDLPAPWFIYSFMAVGILVCIVTFIGFIAAEAINGCCLCFYSILKTLLILLEAALVAYIAIDRHWEKDLPYDPTGELSSLRAFIEENIDICKWVGIAVVAVQLLSLLLAMVLRAMVSTPKPELDEEEDDENPRSRTWDPLLGPQGNQAPAGSSKIENWSSRIREKYGLNQSPPVNPKG</sequence>
<keyword id="KW-0472">Membrane</keyword>
<keyword id="KW-0597">Phosphoprotein</keyword>
<keyword id="KW-1185">Reference proteome</keyword>
<keyword id="KW-0812">Transmembrane</keyword>
<keyword id="KW-1133">Transmembrane helix</keyword>
<keyword id="KW-0926">Vacuole</keyword>
<protein>
    <recommendedName>
        <fullName>Tetraspanin-18</fullName>
    </recommendedName>
    <alternativeName>
        <fullName>TOM2A homologous protein 2</fullName>
    </alternativeName>
</protein>
<gene>
    <name type="primary">TOM2AH2</name>
    <name type="ordered locus">At2g20230</name>
    <name type="ORF">F11A3.22</name>
</gene>
<proteinExistence type="evidence at protein level"/>
<comment type="function">
    <text evidence="6">May be involved in the regulation of cell differentiation.</text>
</comment>
<comment type="function">
    <text evidence="6">Promotes intracellular multiplication of tobamoviruses, probably being a component of the replication complex.</text>
</comment>
<comment type="subunit">
    <text evidence="1">Homodimer. Constituent of tobamovirus replication complex (By similarity).</text>
</comment>
<comment type="subcellular location">
    <subcellularLocation>
        <location evidence="1">Membrane</location>
        <topology evidence="7">Multi-pass membrane protein</topology>
    </subcellularLocation>
    <subcellularLocation>
        <location evidence="5">Vacuole membrane</location>
        <topology evidence="3">Multi-pass membrane protein</topology>
    </subcellularLocation>
</comment>
<comment type="tissue specificity">
    <text evidence="6">Expressed in rosette leaves.</text>
</comment>
<comment type="disruption phenotype">
    <text evidence="6">Slightly reduced efficiency of intracellular multiplication of tobamoviruses (e.g. crucifer strain TMV-Cg), characterized by a reduced amplification of TMV-related RNAs.</text>
</comment>
<comment type="similarity">
    <text evidence="7">Belongs to the tetraspanin (TM4SF) family.</text>
</comment>
<organism>
    <name type="scientific">Arabidopsis thaliana</name>
    <name type="common">Mouse-ear cress</name>
    <dbReference type="NCBI Taxonomy" id="3702"/>
    <lineage>
        <taxon>Eukaryota</taxon>
        <taxon>Viridiplantae</taxon>
        <taxon>Streptophyta</taxon>
        <taxon>Embryophyta</taxon>
        <taxon>Tracheophyta</taxon>
        <taxon>Spermatophyta</taxon>
        <taxon>Magnoliopsida</taxon>
        <taxon>eudicotyledons</taxon>
        <taxon>Gunneridae</taxon>
        <taxon>Pentapetalae</taxon>
        <taxon>rosids</taxon>
        <taxon>malvids</taxon>
        <taxon>Brassicales</taxon>
        <taxon>Brassicaceae</taxon>
        <taxon>Camelineae</taxon>
        <taxon>Arabidopsis</taxon>
    </lineage>
</organism>
<evidence type="ECO:0000250" key="1"/>
<evidence type="ECO:0000250" key="2">
    <source>
        <dbReference type="UniProtKB" id="Q9C5W7"/>
    </source>
</evidence>
<evidence type="ECO:0000255" key="3"/>
<evidence type="ECO:0000256" key="4">
    <source>
        <dbReference type="SAM" id="MobiDB-lite"/>
    </source>
</evidence>
<evidence type="ECO:0000269" key="5">
    <source>
    </source>
</evidence>
<evidence type="ECO:0000269" key="6">
    <source>
    </source>
</evidence>
<evidence type="ECO:0000305" key="7"/>
<name>TET18_ARATH</name>
<feature type="chain" id="PRO_0000421058" description="Tetraspanin-18">
    <location>
        <begin position="1"/>
        <end position="270"/>
    </location>
</feature>
<feature type="topological domain" description="Cytoplasmic" evidence="3">
    <location>
        <begin position="1"/>
        <end position="15"/>
    </location>
</feature>
<feature type="transmembrane region" description="Helical" evidence="3">
    <location>
        <begin position="16"/>
        <end position="36"/>
    </location>
</feature>
<feature type="topological domain" description="Extracellular" evidence="3">
    <location>
        <begin position="37"/>
        <end position="99"/>
    </location>
</feature>
<feature type="transmembrane region" description="Helical" evidence="3">
    <location>
        <begin position="100"/>
        <end position="120"/>
    </location>
</feature>
<feature type="topological domain" description="Cytoplasmic" evidence="3">
    <location>
        <begin position="121"/>
        <end position="132"/>
    </location>
</feature>
<feature type="transmembrane region" description="Helical" evidence="3">
    <location>
        <begin position="133"/>
        <end position="153"/>
    </location>
</feature>
<feature type="topological domain" description="Extracellular" evidence="3">
    <location>
        <begin position="154"/>
        <end position="183"/>
    </location>
</feature>
<feature type="transmembrane region" description="Helical" evidence="3">
    <location>
        <begin position="184"/>
        <end position="204"/>
    </location>
</feature>
<feature type="topological domain" description="Cytoplasmic" evidence="3">
    <location>
        <begin position="205"/>
        <end position="270"/>
    </location>
</feature>
<feature type="region of interest" description="Disordered" evidence="4">
    <location>
        <begin position="212"/>
        <end position="249"/>
    </location>
</feature>
<feature type="compositionally biased region" description="Polar residues" evidence="4">
    <location>
        <begin position="236"/>
        <end position="249"/>
    </location>
</feature>
<feature type="modified residue" description="Phosphoserine" evidence="2">
    <location>
        <position position="245"/>
    </location>
</feature>